<organism>
    <name type="scientific">Vitis vinifera</name>
    <name type="common">Grape</name>
    <dbReference type="NCBI Taxonomy" id="29760"/>
    <lineage>
        <taxon>Eukaryota</taxon>
        <taxon>Viridiplantae</taxon>
        <taxon>Streptophyta</taxon>
        <taxon>Embryophyta</taxon>
        <taxon>Tracheophyta</taxon>
        <taxon>Spermatophyta</taxon>
        <taxon>Magnoliopsida</taxon>
        <taxon>eudicotyledons</taxon>
        <taxon>Gunneridae</taxon>
        <taxon>Pentapetalae</taxon>
        <taxon>rosids</taxon>
        <taxon>Vitales</taxon>
        <taxon>Vitaceae</taxon>
        <taxon>Viteae</taxon>
        <taxon>Vitis</taxon>
    </lineage>
</organism>
<reference key="1">
    <citation type="journal article" date="2017" name="J. Exp. Bot.">
        <title>The MADS-box gene Agamous-like 11 is essential for seed morphogenesis in grapevine.</title>
        <authorList>
            <person name="Malabarba J."/>
            <person name="Buffon V."/>
            <person name="Mariath J.E.A."/>
            <person name="Gaeta M.L."/>
            <person name="Dornelas M.C."/>
            <person name="Margis-Pinheiro M."/>
            <person name="Pasquali G."/>
            <person name="Revers L.F."/>
        </authorList>
    </citation>
    <scope>NUCLEOTIDE SEQUENCE [GENOMIC DNA]</scope>
    <source>
        <strain>cv. Sultanina</strain>
    </source>
</reference>
<reference key="2">
    <citation type="journal article" date="2009" name="Plant Physiol.">
        <title>Genome-wide analysis of MIKCC-type MADS box genes in grapevine.</title>
        <authorList>
            <person name="Diaz-Riquelme J."/>
            <person name="Lijavetzky D."/>
            <person name="Martinez-Zapater J.M."/>
            <person name="Carmona M.J."/>
        </authorList>
    </citation>
    <scope>GENE FAMILY</scope>
</reference>
<reference key="3">
    <citation type="journal article" date="2016" name="BMC Genomics">
        <title>Structural and functional annotation of the MADS-box transcription factor family in grapevine.</title>
        <authorList>
            <person name="Grimplet J."/>
            <person name="Martinez-Zapater J.M."/>
            <person name="Carmona M.J."/>
        </authorList>
    </citation>
    <scope>GENE FAMILY</scope>
</reference>
<reference key="4">
    <citation type="journal article" date="2018" name="Plant Physiol.">
        <title>The major origin of seedless grapes is associated with a missense mutation in the MADS-box gene VviAGL11.</title>
        <authorList>
            <person name="Royo C."/>
            <person name="Torres-Perez R."/>
            <person name="Mauri N."/>
            <person name="Diestro N."/>
            <person name="Cabezas J.A."/>
            <person name="Marchal C."/>
            <person name="Lacombe T."/>
            <person name="Ibanez J."/>
            <person name="Tornel M."/>
            <person name="Carreno J."/>
            <person name="Martinez-Zapater J.M."/>
            <person name="Carbonell-Bejerano P."/>
        </authorList>
    </citation>
    <scope>FUNCTION</scope>
    <scope>POLYMORPHISM</scope>
</reference>
<accession>A0A217EJJ0</accession>
<feature type="chain" id="PRO_0000447283" description="Agamous-like MADS-box protein AGL11">
    <location>
        <begin position="1"/>
        <end position="223"/>
    </location>
</feature>
<feature type="domain" description="MADS-box" evidence="1">
    <location>
        <begin position="1"/>
        <end position="61"/>
    </location>
</feature>
<feature type="domain" description="K-box" evidence="2">
    <location>
        <begin position="87"/>
        <end position="177"/>
    </location>
</feature>
<name>AG11S_VITVI</name>
<gene>
    <name evidence="6" type="primary">AGL11</name>
    <name evidence="7" type="synonym">MADS5</name>
    <name evidence="7" type="synonym">SDI</name>
</gene>
<proteinExistence type="inferred from homology"/>
<evidence type="ECO:0000255" key="1">
    <source>
        <dbReference type="PROSITE-ProRule" id="PRU00251"/>
    </source>
</evidence>
<evidence type="ECO:0000255" key="2">
    <source>
        <dbReference type="PROSITE-ProRule" id="PRU00629"/>
    </source>
</evidence>
<evidence type="ECO:0000269" key="3">
    <source>
    </source>
</evidence>
<evidence type="ECO:0000303" key="4">
    <source>
    </source>
</evidence>
<evidence type="ECO:0000303" key="5">
    <source>
    </source>
</evidence>
<evidence type="ECO:0000303" key="6">
    <source>
    </source>
</evidence>
<evidence type="ECO:0000305" key="7"/>
<dbReference type="EMBL" id="KM401848">
    <property type="protein sequence ID" value="AKJ79180.1"/>
    <property type="molecule type" value="Genomic_DNA"/>
</dbReference>
<dbReference type="SMR" id="A0A217EJJ0"/>
<dbReference type="ExpressionAtlas" id="A0A217EJJ0">
    <property type="expression patterns" value="baseline and differential"/>
</dbReference>
<dbReference type="GO" id="GO:0005634">
    <property type="term" value="C:nucleus"/>
    <property type="evidence" value="ECO:0007669"/>
    <property type="project" value="UniProtKB-SubCell"/>
</dbReference>
<dbReference type="GO" id="GO:0003700">
    <property type="term" value="F:DNA-binding transcription factor activity"/>
    <property type="evidence" value="ECO:0007669"/>
    <property type="project" value="InterPro"/>
</dbReference>
<dbReference type="GO" id="GO:0046983">
    <property type="term" value="F:protein dimerization activity"/>
    <property type="evidence" value="ECO:0007669"/>
    <property type="project" value="InterPro"/>
</dbReference>
<dbReference type="GO" id="GO:0000977">
    <property type="term" value="F:RNA polymerase II transcription regulatory region sequence-specific DNA binding"/>
    <property type="evidence" value="ECO:0007669"/>
    <property type="project" value="InterPro"/>
</dbReference>
<dbReference type="GO" id="GO:0045944">
    <property type="term" value="P:positive regulation of transcription by RNA polymerase II"/>
    <property type="evidence" value="ECO:0007669"/>
    <property type="project" value="InterPro"/>
</dbReference>
<dbReference type="GO" id="GO:0048316">
    <property type="term" value="P:seed development"/>
    <property type="evidence" value="ECO:0000315"/>
    <property type="project" value="UniProtKB"/>
</dbReference>
<dbReference type="CDD" id="cd00265">
    <property type="entry name" value="MADS_MEF2_like"/>
    <property type="match status" value="1"/>
</dbReference>
<dbReference type="FunFam" id="3.40.1810.10:FF:000009">
    <property type="entry name" value="agamous-like MADS-box protein AGL11"/>
    <property type="match status" value="1"/>
</dbReference>
<dbReference type="Gene3D" id="3.40.1810.10">
    <property type="entry name" value="Transcription factor, MADS-box"/>
    <property type="match status" value="1"/>
</dbReference>
<dbReference type="InterPro" id="IPR050142">
    <property type="entry name" value="MADS-box/MEF2_TF"/>
</dbReference>
<dbReference type="InterPro" id="IPR033896">
    <property type="entry name" value="MEF2-like_N"/>
</dbReference>
<dbReference type="InterPro" id="IPR002487">
    <property type="entry name" value="TF_Kbox"/>
</dbReference>
<dbReference type="InterPro" id="IPR002100">
    <property type="entry name" value="TF_MADSbox"/>
</dbReference>
<dbReference type="InterPro" id="IPR036879">
    <property type="entry name" value="TF_MADSbox_sf"/>
</dbReference>
<dbReference type="PANTHER" id="PTHR48019">
    <property type="entry name" value="SERUM RESPONSE FACTOR HOMOLOG"/>
    <property type="match status" value="1"/>
</dbReference>
<dbReference type="Pfam" id="PF01486">
    <property type="entry name" value="K-box"/>
    <property type="match status" value="1"/>
</dbReference>
<dbReference type="Pfam" id="PF00319">
    <property type="entry name" value="SRF-TF"/>
    <property type="match status" value="1"/>
</dbReference>
<dbReference type="PRINTS" id="PR00404">
    <property type="entry name" value="MADSDOMAIN"/>
</dbReference>
<dbReference type="SMART" id="SM00432">
    <property type="entry name" value="MADS"/>
    <property type="match status" value="1"/>
</dbReference>
<dbReference type="SUPFAM" id="SSF55455">
    <property type="entry name" value="SRF-like"/>
    <property type="match status" value="1"/>
</dbReference>
<dbReference type="PROSITE" id="PS51297">
    <property type="entry name" value="K_BOX"/>
    <property type="match status" value="1"/>
</dbReference>
<dbReference type="PROSITE" id="PS00350">
    <property type="entry name" value="MADS_BOX_1"/>
    <property type="match status" value="1"/>
</dbReference>
<dbReference type="PROSITE" id="PS50066">
    <property type="entry name" value="MADS_BOX_2"/>
    <property type="match status" value="1"/>
</dbReference>
<protein>
    <recommendedName>
        <fullName evidence="7">Agamous-like MADS-box protein AGL11</fullName>
    </recommendedName>
    <alternativeName>
        <fullName evidence="6">Agamous like-protein 11</fullName>
        <shortName evidence="7">VvAGL11</shortName>
    </alternativeName>
    <alternativeName>
        <fullName evidence="7">MADS-box protein 5</fullName>
        <shortName evidence="7">VvMADS5</shortName>
    </alternativeName>
    <alternativeName>
        <fullName evidence="7">Protein SEED DEVELOPMENT INHIBITOR</fullName>
    </alternativeName>
    <alternativeName>
        <fullName evidence="4">VvAG3</fullName>
    </alternativeName>
    <alternativeName>
        <fullName evidence="5">VviAG3</fullName>
    </alternativeName>
</protein>
<comment type="function">
    <text evidence="3">Probable transcription factor involved in seed development.</text>
</comment>
<comment type="subcellular location">
    <subcellularLocation>
        <location evidence="1">Nucleus</location>
    </subcellularLocation>
</comment>
<comment type="polymorphism">
    <text evidence="3">A single amino acid substitution of Arg-197 in cultivar Sultanina (AC F6I457) to Leu-197 in a Sultanina mutant cultivar (AC A0A217EJJ0) is responsible for the production of seedless grape.</text>
</comment>
<sequence length="223" mass="25600">MGRGKIEIKRIENTTNRQVTFCKRRNGLLKKAYELSVLCDAEVALIVFSSRGRVYEYSNNNIKSTIDRYKKASSDSTNGGSTMEINAQYYQQESAKLRQQIQMLQNSNRHLMGDSLASLTVKELKQLENRLERGITRIRSKKHELLLAEIEYLQKREIELENESVYLRTKIAEVERLQQANMVSTHEFNAIQALVSLNFFQPNMIEGGSAGYPLPDKKVLHLG</sequence>
<keyword id="KW-0217">Developmental protein</keyword>
<keyword id="KW-0238">DNA-binding</keyword>
<keyword id="KW-0539">Nucleus</keyword>
<keyword id="KW-0804">Transcription</keyword>
<keyword id="KW-0805">Transcription regulation</keyword>